<protein>
    <recommendedName>
        <fullName>Sperm protamine P1</fullName>
    </recommendedName>
</protein>
<name>HSP1_SARHA</name>
<organism>
    <name type="scientific">Sarcophilus harrisii</name>
    <name type="common">Tasmanian devil</name>
    <name type="synonym">Sarcophilus laniarius</name>
    <dbReference type="NCBI Taxonomy" id="9305"/>
    <lineage>
        <taxon>Eukaryota</taxon>
        <taxon>Metazoa</taxon>
        <taxon>Chordata</taxon>
        <taxon>Craniata</taxon>
        <taxon>Vertebrata</taxon>
        <taxon>Euteleostomi</taxon>
        <taxon>Mammalia</taxon>
        <taxon>Metatheria</taxon>
        <taxon>Dasyuromorphia</taxon>
        <taxon>Dasyuridae</taxon>
        <taxon>Sarcophilus</taxon>
    </lineage>
</organism>
<reference key="1">
    <citation type="journal article" date="1995" name="Proc. R. Soc. B">
        <title>Molecular phylogeny and evolution of marsupial protamine P1 genes.</title>
        <authorList>
            <person name="Retief J.D."/>
            <person name="Krajewski C."/>
            <person name="Westerman M."/>
            <person name="Winkfein R.J."/>
            <person name="Dixon G.H."/>
        </authorList>
    </citation>
    <scope>NUCLEOTIDE SEQUENCE [GENOMIC DNA]</scope>
    <source>
        <tissue>Sperm</tissue>
    </source>
</reference>
<proteinExistence type="evidence at transcript level"/>
<comment type="function">
    <text>Protamines substitute for histones in the chromatin of sperm during the haploid phase of spermatogenesis. They compact sperm DNA into a highly condensed, stable and inactive complex.</text>
</comment>
<comment type="subcellular location">
    <subcellularLocation>
        <location>Nucleus</location>
    </subcellularLocation>
    <subcellularLocation>
        <location>Chromosome</location>
    </subcellularLocation>
</comment>
<comment type="tissue specificity">
    <text>Testis.</text>
</comment>
<comment type="similarity">
    <text evidence="2">Belongs to the protamine P1 family.</text>
</comment>
<evidence type="ECO:0000256" key="1">
    <source>
        <dbReference type="SAM" id="MobiDB-lite"/>
    </source>
</evidence>
<evidence type="ECO:0000305" key="2"/>
<keyword id="KW-0158">Chromosome</keyword>
<keyword id="KW-0217">Developmental protein</keyword>
<keyword id="KW-0221">Differentiation</keyword>
<keyword id="KW-0226">DNA condensation</keyword>
<keyword id="KW-0238">DNA-binding</keyword>
<keyword id="KW-0544">Nucleosome core</keyword>
<keyword id="KW-0539">Nucleus</keyword>
<keyword id="KW-1185">Reference proteome</keyword>
<keyword id="KW-0744">Spermatogenesis</keyword>
<feature type="chain" id="PRO_0000191554" description="Sperm protamine P1">
    <location>
        <begin position="1"/>
        <end position="62"/>
    </location>
</feature>
<feature type="region of interest" description="Disordered" evidence="1">
    <location>
        <begin position="1"/>
        <end position="62"/>
    </location>
</feature>
<dbReference type="EMBL" id="L35324">
    <property type="protein sequence ID" value="AAA74608.1"/>
    <property type="molecule type" value="Genomic_DNA"/>
</dbReference>
<dbReference type="Ensembl" id="ENSSHAT00000034032.1">
    <property type="protein sequence ID" value="ENSSHAP00000025643.1"/>
    <property type="gene ID" value="ENSSHAG00000023877.1"/>
</dbReference>
<dbReference type="HOGENOM" id="CLU_2903624_0_0_1"/>
<dbReference type="InParanoid" id="P62486"/>
<dbReference type="OMA" id="MARYICC"/>
<dbReference type="Proteomes" id="UP000007648">
    <property type="component" value="Unassembled WGS sequence"/>
</dbReference>
<dbReference type="GO" id="GO:0000786">
    <property type="term" value="C:nucleosome"/>
    <property type="evidence" value="ECO:0007669"/>
    <property type="project" value="UniProtKB-KW"/>
</dbReference>
<dbReference type="GO" id="GO:0005634">
    <property type="term" value="C:nucleus"/>
    <property type="evidence" value="ECO:0007669"/>
    <property type="project" value="UniProtKB-SubCell"/>
</dbReference>
<dbReference type="GO" id="GO:0003677">
    <property type="term" value="F:DNA binding"/>
    <property type="evidence" value="ECO:0007669"/>
    <property type="project" value="UniProtKB-KW"/>
</dbReference>
<dbReference type="GO" id="GO:0030261">
    <property type="term" value="P:chromosome condensation"/>
    <property type="evidence" value="ECO:0007669"/>
    <property type="project" value="UniProtKB-KW"/>
</dbReference>
<dbReference type="GO" id="GO:0035092">
    <property type="term" value="P:sperm DNA condensation"/>
    <property type="evidence" value="ECO:0007669"/>
    <property type="project" value="InterPro"/>
</dbReference>
<dbReference type="InterPro" id="IPR000221">
    <property type="entry name" value="Protamine_P1"/>
</dbReference>
<dbReference type="PROSITE" id="PS00048">
    <property type="entry name" value="PROTAMINE_P1"/>
    <property type="match status" value="1"/>
</dbReference>
<sequence>MARYRRRSRSRSRSRYRRRRRRRSRGRRRRTYRRSRRHSRRRRGRRRGYSRRRYSRRGRRRY</sequence>
<gene>
    <name type="primary">PRM1</name>
</gene>
<accession>P62486</accession>
<accession>P42151</accession>